<name>LIPB_ECTM1</name>
<keyword id="KW-0012">Acyltransferase</keyword>
<keyword id="KW-0963">Cytoplasm</keyword>
<keyword id="KW-0808">Transferase</keyword>
<sequence>MPELVVRHLGLVEYQPTLESMRQLTRERDERTADEIWLLQHPKVFTQGQAGKAEHLLAPGDIPVVQVERGGQVTYHGPGQLVAYLMLDLRRLDLGVRELVTAMEQSLVDLLASYGIEAAPKADAPGVYVAGDKIASLGLRVSRGCSFHGLALNVDMDMTPFLRINPCGYAGLKMVQMRDLLPSPPAFDEVSQRLEQALRARLGYA</sequence>
<comment type="function">
    <text evidence="1">Catalyzes the transfer of endogenously produced octanoic acid from octanoyl-acyl-carrier-protein onto the lipoyl domains of lipoate-dependent enzymes. Lipoyl-ACP can also act as a substrate although octanoyl-ACP is likely to be the physiological substrate.</text>
</comment>
<comment type="catalytic activity">
    <reaction evidence="1">
        <text>octanoyl-[ACP] + L-lysyl-[protein] = N(6)-octanoyl-L-lysyl-[protein] + holo-[ACP] + H(+)</text>
        <dbReference type="Rhea" id="RHEA:17665"/>
        <dbReference type="Rhea" id="RHEA-COMP:9636"/>
        <dbReference type="Rhea" id="RHEA-COMP:9685"/>
        <dbReference type="Rhea" id="RHEA-COMP:9752"/>
        <dbReference type="Rhea" id="RHEA-COMP:9928"/>
        <dbReference type="ChEBI" id="CHEBI:15378"/>
        <dbReference type="ChEBI" id="CHEBI:29969"/>
        <dbReference type="ChEBI" id="CHEBI:64479"/>
        <dbReference type="ChEBI" id="CHEBI:78463"/>
        <dbReference type="ChEBI" id="CHEBI:78809"/>
        <dbReference type="EC" id="2.3.1.181"/>
    </reaction>
</comment>
<comment type="pathway">
    <text evidence="1">Protein modification; protein lipoylation via endogenous pathway; protein N(6)-(lipoyl)lysine from octanoyl-[acyl-carrier-protein]: step 1/2.</text>
</comment>
<comment type="subcellular location">
    <subcellularLocation>
        <location evidence="1">Cytoplasm</location>
    </subcellularLocation>
</comment>
<comment type="miscellaneous">
    <text evidence="1">In the reaction, the free carboxyl group of octanoic acid is attached via an amide linkage to the epsilon-amino group of a specific lysine residue of lipoyl domains of lipoate-dependent enzymes.</text>
</comment>
<comment type="similarity">
    <text evidence="1">Belongs to the LipB family.</text>
</comment>
<reference key="1">
    <citation type="submission" date="2007-04" db="EMBL/GenBank/DDBJ databases">
        <title>Complete sequence of Pseudomonas mendocina ymp.</title>
        <authorList>
            <consortium name="US DOE Joint Genome Institute"/>
            <person name="Copeland A."/>
            <person name="Lucas S."/>
            <person name="Lapidus A."/>
            <person name="Barry K."/>
            <person name="Glavina del Rio T."/>
            <person name="Dalin E."/>
            <person name="Tice H."/>
            <person name="Pitluck S."/>
            <person name="Kiss H."/>
            <person name="Brettin T."/>
            <person name="Detter J.C."/>
            <person name="Bruce D."/>
            <person name="Han C."/>
            <person name="Schmutz J."/>
            <person name="Larimer F."/>
            <person name="Land M."/>
            <person name="Hauser L."/>
            <person name="Kyrpides N."/>
            <person name="Mikhailova N."/>
            <person name="Hersman L."/>
            <person name="Dubois J."/>
            <person name="Maurice P."/>
            <person name="Richardson P."/>
        </authorList>
    </citation>
    <scope>NUCLEOTIDE SEQUENCE [LARGE SCALE GENOMIC DNA]</scope>
    <source>
        <strain>ymp</strain>
    </source>
</reference>
<feature type="chain" id="PRO_0000321660" description="Octanoyltransferase">
    <location>
        <begin position="1"/>
        <end position="205"/>
    </location>
</feature>
<feature type="domain" description="BPL/LPL catalytic" evidence="2">
    <location>
        <begin position="30"/>
        <end position="205"/>
    </location>
</feature>
<feature type="active site" description="Acyl-thioester intermediate" evidence="1">
    <location>
        <position position="167"/>
    </location>
</feature>
<feature type="binding site" evidence="1">
    <location>
        <begin position="69"/>
        <end position="76"/>
    </location>
    <ligand>
        <name>substrate</name>
    </ligand>
</feature>
<feature type="binding site" evidence="1">
    <location>
        <begin position="136"/>
        <end position="138"/>
    </location>
    <ligand>
        <name>substrate</name>
    </ligand>
</feature>
<feature type="binding site" evidence="1">
    <location>
        <begin position="149"/>
        <end position="151"/>
    </location>
    <ligand>
        <name>substrate</name>
    </ligand>
</feature>
<feature type="site" description="Lowers pKa of active site Cys" evidence="1">
    <location>
        <position position="133"/>
    </location>
</feature>
<dbReference type="EC" id="2.3.1.181" evidence="1"/>
<dbReference type="EMBL" id="CP000680">
    <property type="protein sequence ID" value="ABP86540.1"/>
    <property type="molecule type" value="Genomic_DNA"/>
</dbReference>
<dbReference type="SMR" id="A4XYX4"/>
<dbReference type="STRING" id="399739.Pmen_3792"/>
<dbReference type="KEGG" id="pmy:Pmen_3792"/>
<dbReference type="PATRIC" id="fig|399739.8.peg.3845"/>
<dbReference type="eggNOG" id="COG0321">
    <property type="taxonomic scope" value="Bacteria"/>
</dbReference>
<dbReference type="HOGENOM" id="CLU_035168_3_1_6"/>
<dbReference type="OrthoDB" id="9787061at2"/>
<dbReference type="UniPathway" id="UPA00538">
    <property type="reaction ID" value="UER00592"/>
</dbReference>
<dbReference type="GO" id="GO:0005737">
    <property type="term" value="C:cytoplasm"/>
    <property type="evidence" value="ECO:0007669"/>
    <property type="project" value="UniProtKB-SubCell"/>
</dbReference>
<dbReference type="GO" id="GO:0033819">
    <property type="term" value="F:lipoyl(octanoyl) transferase activity"/>
    <property type="evidence" value="ECO:0007669"/>
    <property type="project" value="UniProtKB-EC"/>
</dbReference>
<dbReference type="GO" id="GO:0036211">
    <property type="term" value="P:protein modification process"/>
    <property type="evidence" value="ECO:0007669"/>
    <property type="project" value="InterPro"/>
</dbReference>
<dbReference type="CDD" id="cd16444">
    <property type="entry name" value="LipB"/>
    <property type="match status" value="1"/>
</dbReference>
<dbReference type="FunFam" id="3.30.930.10:FF:000020">
    <property type="entry name" value="Octanoyltransferase"/>
    <property type="match status" value="1"/>
</dbReference>
<dbReference type="Gene3D" id="3.30.930.10">
    <property type="entry name" value="Bira Bifunctional Protein, Domain 2"/>
    <property type="match status" value="1"/>
</dbReference>
<dbReference type="HAMAP" id="MF_00013">
    <property type="entry name" value="LipB"/>
    <property type="match status" value="1"/>
</dbReference>
<dbReference type="InterPro" id="IPR045864">
    <property type="entry name" value="aa-tRNA-synth_II/BPL/LPL"/>
</dbReference>
<dbReference type="InterPro" id="IPR004143">
    <property type="entry name" value="BPL_LPL_catalytic"/>
</dbReference>
<dbReference type="InterPro" id="IPR000544">
    <property type="entry name" value="Octanoyltransferase"/>
</dbReference>
<dbReference type="InterPro" id="IPR020605">
    <property type="entry name" value="Octanoyltransferase_CS"/>
</dbReference>
<dbReference type="NCBIfam" id="TIGR00214">
    <property type="entry name" value="lipB"/>
    <property type="match status" value="1"/>
</dbReference>
<dbReference type="NCBIfam" id="NF010922">
    <property type="entry name" value="PRK14342.1"/>
    <property type="match status" value="1"/>
</dbReference>
<dbReference type="PANTHER" id="PTHR10993:SF7">
    <property type="entry name" value="LIPOYLTRANSFERASE 2, MITOCHONDRIAL-RELATED"/>
    <property type="match status" value="1"/>
</dbReference>
<dbReference type="PANTHER" id="PTHR10993">
    <property type="entry name" value="OCTANOYLTRANSFERASE"/>
    <property type="match status" value="1"/>
</dbReference>
<dbReference type="Pfam" id="PF21948">
    <property type="entry name" value="LplA-B_cat"/>
    <property type="match status" value="1"/>
</dbReference>
<dbReference type="PIRSF" id="PIRSF016262">
    <property type="entry name" value="LPLase"/>
    <property type="match status" value="1"/>
</dbReference>
<dbReference type="SUPFAM" id="SSF55681">
    <property type="entry name" value="Class II aaRS and biotin synthetases"/>
    <property type="match status" value="1"/>
</dbReference>
<dbReference type="PROSITE" id="PS51733">
    <property type="entry name" value="BPL_LPL_CATALYTIC"/>
    <property type="match status" value="1"/>
</dbReference>
<dbReference type="PROSITE" id="PS01313">
    <property type="entry name" value="LIPB"/>
    <property type="match status" value="1"/>
</dbReference>
<proteinExistence type="inferred from homology"/>
<protein>
    <recommendedName>
        <fullName evidence="1">Octanoyltransferase</fullName>
        <ecNumber evidence="1">2.3.1.181</ecNumber>
    </recommendedName>
    <alternativeName>
        <fullName evidence="1">Lipoate-protein ligase B</fullName>
    </alternativeName>
    <alternativeName>
        <fullName evidence="1">Lipoyl/octanoyl transferase</fullName>
    </alternativeName>
    <alternativeName>
        <fullName evidence="1">Octanoyl-[acyl-carrier-protein]-protein N-octanoyltransferase</fullName>
    </alternativeName>
</protein>
<gene>
    <name evidence="1" type="primary">lipB</name>
    <name type="ordered locus">Pmen_3792</name>
</gene>
<accession>A4XYX4</accession>
<evidence type="ECO:0000255" key="1">
    <source>
        <dbReference type="HAMAP-Rule" id="MF_00013"/>
    </source>
</evidence>
<evidence type="ECO:0000255" key="2">
    <source>
        <dbReference type="PROSITE-ProRule" id="PRU01067"/>
    </source>
</evidence>
<organism>
    <name type="scientific">Ectopseudomonas mendocina (strain ymp)</name>
    <name type="common">Pseudomonas mendocina</name>
    <dbReference type="NCBI Taxonomy" id="399739"/>
    <lineage>
        <taxon>Bacteria</taxon>
        <taxon>Pseudomonadati</taxon>
        <taxon>Pseudomonadota</taxon>
        <taxon>Gammaproteobacteria</taxon>
        <taxon>Pseudomonadales</taxon>
        <taxon>Pseudomonadaceae</taxon>
        <taxon>Ectopseudomonas</taxon>
    </lineage>
</organism>